<proteinExistence type="inferred from homology"/>
<sequence>MSDLFAKLMDQIEMPLDMRRSSAFSSADIIEVKVHSVSRLWEFHFAFAAVLPIATYRELHDRLIRTFEAADIKVTFDIQAAQVDYSDDLLQAYYQEAFEHAPCNSASFKSSFSKLKVTYEDDKLIIAAPGFVNNDHFRNNHLPNLVKQLEAFGFGTLTIDMVSDQEMTEHLTKDFVSSRQALVKKAVQDNLEAQKSLEAMMPPVEEATPAPKFDYKERAAKRQAGFEKATITPMIEIETEENRIVFEGMVFDVERKTTRTGRHIINFKMTDYTSSFALQKWAKDDEELRKFDMIAKGAWLRVQGNIETNPFTKSLTMNVQQVKEIVHHDRKDLMPEGQKRVELHAHTNMSTMDALPTVESLIDTAAKWGHKAVAITDHANVQSFPHGYHRARKAGIKAIFGLEANIVEDKVPISYDPVDMDLHEATYVVFDVETTGLSAMNNDLIQIAASKMFKGNIVEQFDEFIDPGHPLSAFTTELTGITDKHLQGAKPLVTVLKAFQDFCKDSILVAHNASFDVGFMNANYERHDLPKITQPVIDTLEFARNLYPEYKRHGLGPLTKRFQVSLDHHHMANYDAEATGRLLFIFLRDAREKHGIKNLLQLNTDLVAEDSYKKARIKHATIYVQNQVGLKNMFKLVSLSNIKYFEGVPRIPRTVLDAHREGLLLGTACSDGEVFDAVLTKGIDAAVDLAKYYDFIEIMPPAIYQPLVVRELIKDQAGIEQVIRDLIEVGKRAKKPVLATGNVHYLEPEEEIYREIIVRSLGQGAMINRTIGRGEGAQPAPLPKAHFRTTNEMLDEFAFLGKDLAYQVVVQNTQDFADRIEEVEVVKGDLYTPYIDKAEETVAELTYQKAFEIYGNPLPDIIDLRIEKELTSILGNGFAVIYLASQMLVNRSNERGYLVGSRGSVGSSFVATMIGITEVNPMPPHYVCPSCQHSEFITDGSVGSGYDLPNKPCPKCGTPYQKDGQDIPFETFLGFDGDKVPDIDLNFSGDDQPSAHLDVRDIFGDEYAFRAGTVGTVAEKTAYGFVKGYERDYGKFYRDAEVDRLAAGAAGVKRTTGQHPGGIVVIPNYMDVYDFTPVQYPADDVTASWQTTHFNFHDIDENVLKLDILGHDDPTMIRKLQDLSGIDPITIPADDPGVMALFSGTEILGVTPEQIGTPTGMLGIPEFGTNFVRGMVNETHPTTFAELLQLSGLSHGTDVWLGNAQDLIKEGIATLKTVIGCRDDIMVYLMHAGLEPKMAFTIMERVRKGLWLKISEEERNGYIDAMRENNVPDWYIESCGKIKYMFPKAHAAAYVLMALRVAYFKVHHPIMYYCAYFSIRAKAFELKTMSGGLDAVKARMEDITIKRKNNEATNVENDLFTTLEIVNEMLERGFKFGKLDLYKSDAIEFQIKGDTLIPPFIALEGLGENVAKQIVKARQEGEFLSKMELRKRGGASSTLVEKMDEMSILGNMPEDNQLSLFDDFF</sequence>
<gene>
    <name evidence="1" type="primary">polC</name>
    <name type="ordered locus">MGAS9429_Spy1673</name>
</gene>
<evidence type="ECO:0000255" key="1">
    <source>
        <dbReference type="HAMAP-Rule" id="MF_00356"/>
    </source>
</evidence>
<name>DPO3_STRPC</name>
<organism>
    <name type="scientific">Streptococcus pyogenes serotype M12 (strain MGAS9429)</name>
    <dbReference type="NCBI Taxonomy" id="370551"/>
    <lineage>
        <taxon>Bacteria</taxon>
        <taxon>Bacillati</taxon>
        <taxon>Bacillota</taxon>
        <taxon>Bacilli</taxon>
        <taxon>Lactobacillales</taxon>
        <taxon>Streptococcaceae</taxon>
        <taxon>Streptococcus</taxon>
    </lineage>
</organism>
<keyword id="KW-0963">Cytoplasm</keyword>
<keyword id="KW-0235">DNA replication</keyword>
<keyword id="KW-0239">DNA-directed DNA polymerase</keyword>
<keyword id="KW-0269">Exonuclease</keyword>
<keyword id="KW-0378">Hydrolase</keyword>
<keyword id="KW-0540">Nuclease</keyword>
<keyword id="KW-0548">Nucleotidyltransferase</keyword>
<keyword id="KW-0808">Transferase</keyword>
<reference key="1">
    <citation type="journal article" date="2006" name="Proc. Natl. Acad. Sci. U.S.A.">
        <title>Molecular genetic anatomy of inter- and intraserotype variation in the human bacterial pathogen group A Streptococcus.</title>
        <authorList>
            <person name="Beres S.B."/>
            <person name="Richter E.W."/>
            <person name="Nagiec M.J."/>
            <person name="Sumby P."/>
            <person name="Porcella S.F."/>
            <person name="DeLeo F.R."/>
            <person name="Musser J.M."/>
        </authorList>
    </citation>
    <scope>NUCLEOTIDE SEQUENCE [LARGE SCALE GENOMIC DNA]</scope>
    <source>
        <strain>MGAS9429</strain>
    </source>
</reference>
<comment type="function">
    <text evidence="1">Required for replicative DNA synthesis. This DNA polymerase also exhibits 3' to 5' exonuclease activity.</text>
</comment>
<comment type="catalytic activity">
    <reaction evidence="1">
        <text>DNA(n) + a 2'-deoxyribonucleoside 5'-triphosphate = DNA(n+1) + diphosphate</text>
        <dbReference type="Rhea" id="RHEA:22508"/>
        <dbReference type="Rhea" id="RHEA-COMP:17339"/>
        <dbReference type="Rhea" id="RHEA-COMP:17340"/>
        <dbReference type="ChEBI" id="CHEBI:33019"/>
        <dbReference type="ChEBI" id="CHEBI:61560"/>
        <dbReference type="ChEBI" id="CHEBI:173112"/>
        <dbReference type="EC" id="2.7.7.7"/>
    </reaction>
</comment>
<comment type="subcellular location">
    <subcellularLocation>
        <location evidence="1">Cytoplasm</location>
    </subcellularLocation>
</comment>
<comment type="similarity">
    <text evidence="1">Belongs to the DNA polymerase type-C family. PolC subfamily.</text>
</comment>
<feature type="chain" id="PRO_1000048485" description="DNA polymerase III PolC-type">
    <location>
        <begin position="1"/>
        <end position="1465"/>
    </location>
</feature>
<feature type="domain" description="Exonuclease">
    <location>
        <begin position="427"/>
        <end position="583"/>
    </location>
</feature>
<dbReference type="EC" id="2.7.7.7" evidence="1"/>
<dbReference type="EMBL" id="CP000259">
    <property type="protein sequence ID" value="ABF32860.1"/>
    <property type="molecule type" value="Genomic_DNA"/>
</dbReference>
<dbReference type="RefSeq" id="WP_002988040.1">
    <property type="nucleotide sequence ID" value="NC_008021.1"/>
</dbReference>
<dbReference type="SMR" id="Q1JJW3"/>
<dbReference type="KEGG" id="spk:MGAS9429_Spy1673"/>
<dbReference type="HOGENOM" id="CLU_003297_2_0_9"/>
<dbReference type="Proteomes" id="UP000002433">
    <property type="component" value="Chromosome"/>
</dbReference>
<dbReference type="GO" id="GO:0005737">
    <property type="term" value="C:cytoplasm"/>
    <property type="evidence" value="ECO:0007669"/>
    <property type="project" value="UniProtKB-SubCell"/>
</dbReference>
<dbReference type="GO" id="GO:0008408">
    <property type="term" value="F:3'-5' exonuclease activity"/>
    <property type="evidence" value="ECO:0007669"/>
    <property type="project" value="UniProtKB-UniRule"/>
</dbReference>
<dbReference type="GO" id="GO:0003677">
    <property type="term" value="F:DNA binding"/>
    <property type="evidence" value="ECO:0007669"/>
    <property type="project" value="UniProtKB-UniRule"/>
</dbReference>
<dbReference type="GO" id="GO:0003887">
    <property type="term" value="F:DNA-directed DNA polymerase activity"/>
    <property type="evidence" value="ECO:0007669"/>
    <property type="project" value="UniProtKB-UniRule"/>
</dbReference>
<dbReference type="GO" id="GO:0006261">
    <property type="term" value="P:DNA-templated DNA replication"/>
    <property type="evidence" value="ECO:0007669"/>
    <property type="project" value="UniProtKB-UniRule"/>
</dbReference>
<dbReference type="CDD" id="cd06127">
    <property type="entry name" value="DEDDh"/>
    <property type="match status" value="1"/>
</dbReference>
<dbReference type="CDD" id="cd07435">
    <property type="entry name" value="PHP_PolIIIA_POLC"/>
    <property type="match status" value="1"/>
</dbReference>
<dbReference type="CDD" id="cd04484">
    <property type="entry name" value="polC_OBF"/>
    <property type="match status" value="1"/>
</dbReference>
<dbReference type="FunFam" id="3.30.420.10:FF:000045">
    <property type="entry name" value="3'-5' exonuclease DinG"/>
    <property type="match status" value="1"/>
</dbReference>
<dbReference type="Gene3D" id="1.10.150.870">
    <property type="match status" value="1"/>
</dbReference>
<dbReference type="Gene3D" id="3.30.1900.20">
    <property type="match status" value="1"/>
</dbReference>
<dbReference type="Gene3D" id="6.10.140.1510">
    <property type="match status" value="1"/>
</dbReference>
<dbReference type="Gene3D" id="3.20.20.140">
    <property type="entry name" value="Metal-dependent hydrolases"/>
    <property type="match status" value="1"/>
</dbReference>
<dbReference type="Gene3D" id="2.40.50.140">
    <property type="entry name" value="Nucleic acid-binding proteins"/>
    <property type="match status" value="1"/>
</dbReference>
<dbReference type="Gene3D" id="1.10.150.700">
    <property type="entry name" value="PolC, middle finger domain"/>
    <property type="match status" value="1"/>
</dbReference>
<dbReference type="Gene3D" id="3.30.420.10">
    <property type="entry name" value="Ribonuclease H-like superfamily/Ribonuclease H"/>
    <property type="match status" value="1"/>
</dbReference>
<dbReference type="HAMAP" id="MF_00356">
    <property type="entry name" value="DNApol_PolC"/>
    <property type="match status" value="1"/>
</dbReference>
<dbReference type="InterPro" id="IPR011708">
    <property type="entry name" value="DNA_pol3_alpha_NTPase_dom"/>
</dbReference>
<dbReference type="InterPro" id="IPR040982">
    <property type="entry name" value="DNA_pol3_finger"/>
</dbReference>
<dbReference type="InterPro" id="IPR024754">
    <property type="entry name" value="DNA_PolC-like_N_II"/>
</dbReference>
<dbReference type="InterPro" id="IPR028112">
    <property type="entry name" value="DNA_PolC-type_N_I"/>
</dbReference>
<dbReference type="InterPro" id="IPR004805">
    <property type="entry name" value="DnaE2/DnaE/PolC"/>
</dbReference>
<dbReference type="InterPro" id="IPR029460">
    <property type="entry name" value="DNAPol_HHH"/>
</dbReference>
<dbReference type="InterPro" id="IPR006054">
    <property type="entry name" value="DnaQ"/>
</dbReference>
<dbReference type="InterPro" id="IPR013520">
    <property type="entry name" value="Exonuclease_RNaseT/DNA_pol3"/>
</dbReference>
<dbReference type="InterPro" id="IPR012340">
    <property type="entry name" value="NA-bd_OB-fold"/>
</dbReference>
<dbReference type="InterPro" id="IPR004013">
    <property type="entry name" value="PHP_dom"/>
</dbReference>
<dbReference type="InterPro" id="IPR003141">
    <property type="entry name" value="Pol/His_phosphatase_N"/>
</dbReference>
<dbReference type="InterPro" id="IPR016195">
    <property type="entry name" value="Pol/histidinol_Pase-like"/>
</dbReference>
<dbReference type="InterPro" id="IPR006308">
    <property type="entry name" value="Pol_III_a_PolC-type_gram_pos"/>
</dbReference>
<dbReference type="InterPro" id="IPR044923">
    <property type="entry name" value="PolC_middle_finger_sf"/>
</dbReference>
<dbReference type="InterPro" id="IPR012337">
    <property type="entry name" value="RNaseH-like_sf"/>
</dbReference>
<dbReference type="InterPro" id="IPR036397">
    <property type="entry name" value="RNaseH_sf"/>
</dbReference>
<dbReference type="NCBIfam" id="TIGR00573">
    <property type="entry name" value="dnaq"/>
    <property type="match status" value="1"/>
</dbReference>
<dbReference type="NCBIfam" id="TIGR01405">
    <property type="entry name" value="polC_Gram_pos"/>
    <property type="match status" value="1"/>
</dbReference>
<dbReference type="NCBIfam" id="NF001688">
    <property type="entry name" value="PRK00448.1"/>
    <property type="match status" value="1"/>
</dbReference>
<dbReference type="PANTHER" id="PTHR32294:SF5">
    <property type="entry name" value="DNA POLYMERASE III POLC-TYPE"/>
    <property type="match status" value="1"/>
</dbReference>
<dbReference type="PANTHER" id="PTHR32294">
    <property type="entry name" value="DNA POLYMERASE III SUBUNIT ALPHA"/>
    <property type="match status" value="1"/>
</dbReference>
<dbReference type="Pfam" id="PF14480">
    <property type="entry name" value="DNA_pol3_a_NI"/>
    <property type="match status" value="1"/>
</dbReference>
<dbReference type="Pfam" id="PF11490">
    <property type="entry name" value="DNA_pol3_a_NII"/>
    <property type="match status" value="1"/>
</dbReference>
<dbReference type="Pfam" id="PF07733">
    <property type="entry name" value="DNA_pol3_alpha"/>
    <property type="match status" value="2"/>
</dbReference>
<dbReference type="Pfam" id="PF17657">
    <property type="entry name" value="DNA_pol3_finger"/>
    <property type="match status" value="1"/>
</dbReference>
<dbReference type="Pfam" id="PF14579">
    <property type="entry name" value="HHH_6"/>
    <property type="match status" value="1"/>
</dbReference>
<dbReference type="Pfam" id="PF02811">
    <property type="entry name" value="PHP"/>
    <property type="match status" value="2"/>
</dbReference>
<dbReference type="Pfam" id="PF00929">
    <property type="entry name" value="RNase_T"/>
    <property type="match status" value="1"/>
</dbReference>
<dbReference type="SMART" id="SM00479">
    <property type="entry name" value="EXOIII"/>
    <property type="match status" value="1"/>
</dbReference>
<dbReference type="SMART" id="SM00481">
    <property type="entry name" value="POLIIIAc"/>
    <property type="match status" value="1"/>
</dbReference>
<dbReference type="SUPFAM" id="SSF50249">
    <property type="entry name" value="Nucleic acid-binding proteins"/>
    <property type="match status" value="1"/>
</dbReference>
<dbReference type="SUPFAM" id="SSF89550">
    <property type="entry name" value="PHP domain-like"/>
    <property type="match status" value="1"/>
</dbReference>
<dbReference type="SUPFAM" id="SSF53098">
    <property type="entry name" value="Ribonuclease H-like"/>
    <property type="match status" value="1"/>
</dbReference>
<accession>Q1JJW3</accession>
<protein>
    <recommendedName>
        <fullName evidence="1">DNA polymerase III PolC-type</fullName>
        <shortName evidence="1">PolIII</shortName>
        <ecNumber evidence="1">2.7.7.7</ecNumber>
    </recommendedName>
</protein>